<reference key="1">
    <citation type="journal article" date="1998" name="J. Bacteriol.">
        <title>Isolation and characterization of Rhodobacter capsulatus mutants affected in cytochrome cbb3 oxidase activity.</title>
        <authorList>
            <person name="Koch H.G."/>
            <person name="Hwang O."/>
            <person name="Daldal F."/>
        </authorList>
    </citation>
    <scope>NUCLEOTIDE SEQUENCE [GENOMIC DNA]</scope>
    <source>
        <strain>MT1131</strain>
    </source>
</reference>
<reference key="2">
    <citation type="journal article" date="2010" name="J. Bacteriol.">
        <title>Complete genome sequence of the photosynthetic purple nonsulfur bacterium Rhodobacter capsulatus SB 1003.</title>
        <authorList>
            <person name="Strnad H."/>
            <person name="Lapidus A."/>
            <person name="Paces J."/>
            <person name="Ulbrich P."/>
            <person name="Vlcek C."/>
            <person name="Paces V."/>
            <person name="Haselkorn R."/>
        </authorList>
    </citation>
    <scope>NUCLEOTIDE SEQUENCE [LARGE SCALE GENOMIC DNA]</scope>
    <source>
        <strain>ATCC BAA-309 / NBRC 16581 / SB1003</strain>
    </source>
</reference>
<dbReference type="EC" id="5.3.1.16"/>
<dbReference type="EMBL" id="AF016223">
    <property type="protein sequence ID" value="AAC46106.1"/>
    <property type="molecule type" value="Genomic_DNA"/>
</dbReference>
<dbReference type="EMBL" id="CP001312">
    <property type="protein sequence ID" value="ADE84912.1"/>
    <property type="molecule type" value="Genomic_DNA"/>
</dbReference>
<dbReference type="RefSeq" id="WP_013066891.1">
    <property type="nucleotide sequence ID" value="NC_014034.1"/>
</dbReference>
<dbReference type="SMR" id="O30725"/>
<dbReference type="STRING" id="272942.RCAP_rcc01154"/>
<dbReference type="GeneID" id="31490067"/>
<dbReference type="KEGG" id="rcp:RCAP_rcc01154"/>
<dbReference type="eggNOG" id="COG0106">
    <property type="taxonomic scope" value="Bacteria"/>
</dbReference>
<dbReference type="HOGENOM" id="CLU_048577_1_1_5"/>
<dbReference type="OrthoDB" id="9807749at2"/>
<dbReference type="UniPathway" id="UPA00031">
    <property type="reaction ID" value="UER00009"/>
</dbReference>
<dbReference type="Proteomes" id="UP000002361">
    <property type="component" value="Chromosome"/>
</dbReference>
<dbReference type="GO" id="GO:0005737">
    <property type="term" value="C:cytoplasm"/>
    <property type="evidence" value="ECO:0007669"/>
    <property type="project" value="UniProtKB-SubCell"/>
</dbReference>
<dbReference type="GO" id="GO:0003949">
    <property type="term" value="F:1-(5-phosphoribosyl)-5-[(5-phosphoribosylamino)methylideneamino]imidazole-4-carboxamide isomerase activity"/>
    <property type="evidence" value="ECO:0007669"/>
    <property type="project" value="UniProtKB-UniRule"/>
</dbReference>
<dbReference type="GO" id="GO:0000105">
    <property type="term" value="P:L-histidine biosynthetic process"/>
    <property type="evidence" value="ECO:0007669"/>
    <property type="project" value="UniProtKB-UniRule"/>
</dbReference>
<dbReference type="GO" id="GO:0000162">
    <property type="term" value="P:L-tryptophan biosynthetic process"/>
    <property type="evidence" value="ECO:0007669"/>
    <property type="project" value="TreeGrafter"/>
</dbReference>
<dbReference type="CDD" id="cd04732">
    <property type="entry name" value="HisA"/>
    <property type="match status" value="1"/>
</dbReference>
<dbReference type="FunFam" id="3.20.20.70:FF:000009">
    <property type="entry name" value="1-(5-phosphoribosyl)-5-[(5-phosphoribosylamino)methylideneamino] imidazole-4-carboxamide isomerase"/>
    <property type="match status" value="1"/>
</dbReference>
<dbReference type="Gene3D" id="3.20.20.70">
    <property type="entry name" value="Aldolase class I"/>
    <property type="match status" value="1"/>
</dbReference>
<dbReference type="HAMAP" id="MF_01014">
    <property type="entry name" value="HisA"/>
    <property type="match status" value="1"/>
</dbReference>
<dbReference type="InterPro" id="IPR013785">
    <property type="entry name" value="Aldolase_TIM"/>
</dbReference>
<dbReference type="InterPro" id="IPR006062">
    <property type="entry name" value="His_biosynth"/>
</dbReference>
<dbReference type="InterPro" id="IPR006063">
    <property type="entry name" value="HisA_bact_arch"/>
</dbReference>
<dbReference type="InterPro" id="IPR044524">
    <property type="entry name" value="Isoase_HisA-like"/>
</dbReference>
<dbReference type="InterPro" id="IPR023016">
    <property type="entry name" value="Isoase_HisA-like_bact"/>
</dbReference>
<dbReference type="InterPro" id="IPR011060">
    <property type="entry name" value="RibuloseP-bd_barrel"/>
</dbReference>
<dbReference type="NCBIfam" id="TIGR00007">
    <property type="entry name" value="1-(5-phosphoribosyl)-5-[(5-phosphoribosylamino)methylideneamino]imidazole-4-carboxamide isomerase"/>
    <property type="match status" value="1"/>
</dbReference>
<dbReference type="PANTHER" id="PTHR43090">
    <property type="entry name" value="1-(5-PHOSPHORIBOSYL)-5-[(5-PHOSPHORIBOSYLAMINO)METHYLIDENEAMINO] IMIDAZOLE-4-CARBOXAMIDE ISOMERASE"/>
    <property type="match status" value="1"/>
</dbReference>
<dbReference type="PANTHER" id="PTHR43090:SF2">
    <property type="entry name" value="1-(5-PHOSPHORIBOSYL)-5-[(5-PHOSPHORIBOSYLAMINO)METHYLIDENEAMINO] IMIDAZOLE-4-CARBOXAMIDE ISOMERASE"/>
    <property type="match status" value="1"/>
</dbReference>
<dbReference type="Pfam" id="PF00977">
    <property type="entry name" value="His_biosynth"/>
    <property type="match status" value="1"/>
</dbReference>
<dbReference type="SUPFAM" id="SSF51366">
    <property type="entry name" value="Ribulose-phoshate binding barrel"/>
    <property type="match status" value="1"/>
</dbReference>
<evidence type="ECO:0000250" key="1"/>
<evidence type="ECO:0000305" key="2"/>
<gene>
    <name type="primary">hisA</name>
    <name type="ordered locus">RCAP_rcc01154</name>
</gene>
<proteinExistence type="inferred from homology"/>
<organism>
    <name type="scientific">Rhodobacter capsulatus (strain ATCC BAA-309 / NBRC 16581 / SB1003)</name>
    <dbReference type="NCBI Taxonomy" id="272942"/>
    <lineage>
        <taxon>Bacteria</taxon>
        <taxon>Pseudomonadati</taxon>
        <taxon>Pseudomonadota</taxon>
        <taxon>Alphaproteobacteria</taxon>
        <taxon>Rhodobacterales</taxon>
        <taxon>Rhodobacter group</taxon>
        <taxon>Rhodobacter</taxon>
    </lineage>
</organism>
<accession>O30725</accession>
<accession>D5ARP1</accession>
<name>HIS4_RHOCB</name>
<comment type="catalytic activity">
    <reaction>
        <text>1-(5-phospho-beta-D-ribosyl)-5-[(5-phospho-beta-D-ribosylamino)methylideneamino]imidazole-4-carboxamide = 5-[(5-phospho-1-deoxy-D-ribulos-1-ylimino)methylamino]-1-(5-phospho-beta-D-ribosyl)imidazole-4-carboxamide</text>
        <dbReference type="Rhea" id="RHEA:15469"/>
        <dbReference type="ChEBI" id="CHEBI:58435"/>
        <dbReference type="ChEBI" id="CHEBI:58525"/>
        <dbReference type="EC" id="5.3.1.16"/>
    </reaction>
</comment>
<comment type="pathway">
    <text>Amino-acid biosynthesis; L-histidine biosynthesis; L-histidine from 5-phospho-alpha-D-ribose 1-diphosphate: step 4/9.</text>
</comment>
<comment type="subcellular location">
    <subcellularLocation>
        <location evidence="1">Cytoplasm</location>
    </subcellularLocation>
</comment>
<comment type="similarity">
    <text evidence="2">Belongs to the HisA/HisF family.</text>
</comment>
<keyword id="KW-0028">Amino-acid biosynthesis</keyword>
<keyword id="KW-0963">Cytoplasm</keyword>
<keyword id="KW-0368">Histidine biosynthesis</keyword>
<keyword id="KW-0413">Isomerase</keyword>
<keyword id="KW-1185">Reference proteome</keyword>
<sequence length="239" mass="24468">MILYPAIDLKDGNCVRLLHGEMDKATVFGTDPAAQAAKFEAAGCAWVHLVDLNGAFAGEPVNGAAVEAILARITVPAQLGGGIRDMATIERWLSKGLARVILGTVAVENPDLVREAAKAFPGQVAVGIDARNGKVATKGWATETDVLVTDLAQSFEDAGVAAIIYTDILRDGAMTGPNIEATEALGRAVTIPVIASGGVSSLPDLIALRDTGVIAGAISGRAIYDGALDLQAALAALKA</sequence>
<feature type="chain" id="PRO_0000142044" description="1-(5-phosphoribosyl)-5-[(5-phosphoribosylamino)methylideneamino] imidazole-4-carboxamide isomerase">
    <location>
        <begin position="1"/>
        <end position="239"/>
    </location>
</feature>
<feature type="active site" description="Proton acceptor" evidence="1">
    <location>
        <position position="8"/>
    </location>
</feature>
<feature type="active site" description="Proton donor" evidence="1">
    <location>
        <position position="129"/>
    </location>
</feature>
<feature type="sequence conflict" description="In Ref. 1; AAC46106." evidence="2" ref="1">
    <original>D</original>
    <variation>N</variation>
    <location>
        <position position="210"/>
    </location>
</feature>
<feature type="sequence conflict" description="In Ref. 1; AAC46106." evidence="2" ref="1">
    <original>I</original>
    <variation>F</variation>
    <location>
        <position position="218"/>
    </location>
</feature>
<feature type="sequence conflict" description="In Ref. 1; AAC46106." evidence="2" ref="1">
    <original>IYD</original>
    <variation>LYN</variation>
    <location>
        <begin position="223"/>
        <end position="225"/>
    </location>
</feature>
<feature type="sequence conflict" description="In Ref. 1; AAC46106." evidence="2" ref="1">
    <original>D</original>
    <variation>N</variation>
    <location>
        <position position="229"/>
    </location>
</feature>
<feature type="sequence conflict" description="In Ref. 1; AAC46106." evidence="2" ref="1">
    <original>AALKA</original>
    <variation>RP</variation>
    <location>
        <begin position="235"/>
        <end position="239"/>
    </location>
</feature>
<protein>
    <recommendedName>
        <fullName>1-(5-phosphoribosyl)-5-[(5-phosphoribosylamino)methylideneamino] imidazole-4-carboxamide isomerase</fullName>
        <ecNumber>5.3.1.16</ecNumber>
    </recommendedName>
    <alternativeName>
        <fullName>Phosphoribosylformimino-5-aminoimidazole carboxamide ribotide isomerase</fullName>
    </alternativeName>
</protein>